<proteinExistence type="inferred from homology"/>
<dbReference type="EMBL" id="AB237912">
    <property type="protein sequence ID" value="BAE46687.1"/>
    <property type="molecule type" value="Genomic_DNA"/>
</dbReference>
<dbReference type="RefSeq" id="YP_358711.1">
    <property type="nucleotide sequence ID" value="NC_007500.1"/>
</dbReference>
<dbReference type="SMR" id="Q3C1M2"/>
<dbReference type="GeneID" id="3735093"/>
<dbReference type="KEGG" id="nsy:3735093"/>
<dbReference type="OrthoDB" id="26349at4085"/>
<dbReference type="Proteomes" id="UP000189701">
    <property type="component" value="Chloroplast Pltd"/>
</dbReference>
<dbReference type="GO" id="GO:0009507">
    <property type="term" value="C:chloroplast"/>
    <property type="evidence" value="ECO:0007669"/>
    <property type="project" value="UniProtKB-SubCell"/>
</dbReference>
<dbReference type="GO" id="GO:1990904">
    <property type="term" value="C:ribonucleoprotein complex"/>
    <property type="evidence" value="ECO:0007669"/>
    <property type="project" value="UniProtKB-KW"/>
</dbReference>
<dbReference type="GO" id="GO:0005840">
    <property type="term" value="C:ribosome"/>
    <property type="evidence" value="ECO:0007669"/>
    <property type="project" value="UniProtKB-KW"/>
</dbReference>
<dbReference type="GO" id="GO:0019843">
    <property type="term" value="F:rRNA binding"/>
    <property type="evidence" value="ECO:0007669"/>
    <property type="project" value="UniProtKB-UniRule"/>
</dbReference>
<dbReference type="GO" id="GO:0003735">
    <property type="term" value="F:structural constituent of ribosome"/>
    <property type="evidence" value="ECO:0007669"/>
    <property type="project" value="InterPro"/>
</dbReference>
<dbReference type="GO" id="GO:0006412">
    <property type="term" value="P:translation"/>
    <property type="evidence" value="ECO:0007669"/>
    <property type="project" value="UniProtKB-UniRule"/>
</dbReference>
<dbReference type="FunFam" id="3.30.420.80:FF:000003">
    <property type="entry name" value="30S ribosomal protein S11, chloroplastic"/>
    <property type="match status" value="1"/>
</dbReference>
<dbReference type="Gene3D" id="3.30.420.80">
    <property type="entry name" value="Ribosomal protein S11"/>
    <property type="match status" value="1"/>
</dbReference>
<dbReference type="HAMAP" id="MF_01310">
    <property type="entry name" value="Ribosomal_uS11"/>
    <property type="match status" value="1"/>
</dbReference>
<dbReference type="InterPro" id="IPR001971">
    <property type="entry name" value="Ribosomal_uS11"/>
</dbReference>
<dbReference type="InterPro" id="IPR019981">
    <property type="entry name" value="Ribosomal_uS11_bac-type"/>
</dbReference>
<dbReference type="InterPro" id="IPR018102">
    <property type="entry name" value="Ribosomal_uS11_CS"/>
</dbReference>
<dbReference type="InterPro" id="IPR036967">
    <property type="entry name" value="Ribosomal_uS11_sf"/>
</dbReference>
<dbReference type="NCBIfam" id="NF003698">
    <property type="entry name" value="PRK05309.1"/>
    <property type="match status" value="1"/>
</dbReference>
<dbReference type="NCBIfam" id="TIGR03632">
    <property type="entry name" value="uS11_bact"/>
    <property type="match status" value="1"/>
</dbReference>
<dbReference type="PANTHER" id="PTHR11759">
    <property type="entry name" value="40S RIBOSOMAL PROTEIN S14/30S RIBOSOMAL PROTEIN S11"/>
    <property type="match status" value="1"/>
</dbReference>
<dbReference type="Pfam" id="PF00411">
    <property type="entry name" value="Ribosomal_S11"/>
    <property type="match status" value="1"/>
</dbReference>
<dbReference type="PIRSF" id="PIRSF002131">
    <property type="entry name" value="Ribosomal_S11"/>
    <property type="match status" value="1"/>
</dbReference>
<dbReference type="SUPFAM" id="SSF53137">
    <property type="entry name" value="Translational machinery components"/>
    <property type="match status" value="1"/>
</dbReference>
<dbReference type="PROSITE" id="PS00054">
    <property type="entry name" value="RIBOSOMAL_S11"/>
    <property type="match status" value="1"/>
</dbReference>
<gene>
    <name evidence="1" type="primary">rps11</name>
</gene>
<evidence type="ECO:0000255" key="1">
    <source>
        <dbReference type="HAMAP-Rule" id="MF_01310"/>
    </source>
</evidence>
<evidence type="ECO:0000256" key="2">
    <source>
        <dbReference type="SAM" id="MobiDB-lite"/>
    </source>
</evidence>
<evidence type="ECO:0000305" key="3"/>
<accession>Q3C1M2</accession>
<sequence>MAKAIPKISSRRNGRIGSRKGARRIPKGVIHVQASFNNTIVTVTDVRGRVVSWSSAGTSGFKGTRRGTPFAAQTAAANAIRTVVDQGMQRAEVMIKGPGLGRDAALRAIRRSGILLTFVRDVTPMPHNGCRPPKKRRV</sequence>
<name>RR11_NICSY</name>
<organism>
    <name type="scientific">Nicotiana sylvestris</name>
    <name type="common">Wood tobacco</name>
    <name type="synonym">South American tobacco</name>
    <dbReference type="NCBI Taxonomy" id="4096"/>
    <lineage>
        <taxon>Eukaryota</taxon>
        <taxon>Viridiplantae</taxon>
        <taxon>Streptophyta</taxon>
        <taxon>Embryophyta</taxon>
        <taxon>Tracheophyta</taxon>
        <taxon>Spermatophyta</taxon>
        <taxon>Magnoliopsida</taxon>
        <taxon>eudicotyledons</taxon>
        <taxon>Gunneridae</taxon>
        <taxon>Pentapetalae</taxon>
        <taxon>asterids</taxon>
        <taxon>lamiids</taxon>
        <taxon>Solanales</taxon>
        <taxon>Solanaceae</taxon>
        <taxon>Nicotianoideae</taxon>
        <taxon>Nicotianeae</taxon>
        <taxon>Nicotiana</taxon>
    </lineage>
</organism>
<comment type="subunit">
    <text evidence="1">Part of the 30S ribosomal subunit.</text>
</comment>
<comment type="subcellular location">
    <subcellularLocation>
        <location>Plastid</location>
        <location>Chloroplast</location>
    </subcellularLocation>
</comment>
<comment type="similarity">
    <text evidence="1">Belongs to the universal ribosomal protein uS11 family.</text>
</comment>
<feature type="chain" id="PRO_0000230453" description="Small ribosomal subunit protein uS11c">
    <location>
        <begin position="1"/>
        <end position="138"/>
    </location>
</feature>
<feature type="region of interest" description="Disordered" evidence="2">
    <location>
        <begin position="1"/>
        <end position="22"/>
    </location>
</feature>
<feature type="compositionally biased region" description="Basic residues" evidence="2">
    <location>
        <begin position="9"/>
        <end position="22"/>
    </location>
</feature>
<geneLocation type="chloroplast"/>
<keyword id="KW-0150">Chloroplast</keyword>
<keyword id="KW-0934">Plastid</keyword>
<keyword id="KW-1185">Reference proteome</keyword>
<keyword id="KW-0687">Ribonucleoprotein</keyword>
<keyword id="KW-0689">Ribosomal protein</keyword>
<keyword id="KW-0694">RNA-binding</keyword>
<keyword id="KW-0699">rRNA-binding</keyword>
<protein>
    <recommendedName>
        <fullName evidence="1">Small ribosomal subunit protein uS11c</fullName>
    </recommendedName>
    <alternativeName>
        <fullName evidence="3">30S ribosomal protein S11, chloroplastic</fullName>
    </alternativeName>
</protein>
<reference key="1">
    <citation type="journal article" date="2006" name="Mol. Genet. Genomics">
        <title>The chloroplast genome of Nicotiana sylvestris and Nicotiana tomentosiformis: complete sequencing confirms that the Nicotiana sylvestris progenitor is the maternal genome donor of Nicotiana tabacum.</title>
        <authorList>
            <person name="Yukawa M."/>
            <person name="Tsudzuki T."/>
            <person name="Sugiura M."/>
        </authorList>
    </citation>
    <scope>NUCLEOTIDE SEQUENCE [LARGE SCALE GENOMIC DNA]</scope>
</reference>